<sequence length="407" mass="41810">MAAPQNYLAVIKVIGVGGGGVNAINRMIEVGLKGVEFIAINTDAQALLMSDADVKLDVGRELTRGLGAGANPAVGRKAAEDHREEIEEVLKGADMVFVTAGEGGGTGTGRAPVVANIARSLGALTIGVVTRPFTFEGRRRANQAEDGIAELREEVDTLIVIPNDRLLSISDRQVSVLDAFKSADQVLLSGVQGITDLITTPGLINLDFADVKSVMSEAGSALMGIGSARGDDRAVAAAEMAISSPLLEASIDGARGVLLSISGGSDLGLFEINEAAQLVSEAAHPEANIIFGAVIDDALGDEVRVTVIAAGFDGGQPPARRENVLGANSNKREEPAAPARSSAESTRPTGGLGSVPPREESPAPAEPAPATASGESSLGPVSPPHVPPARPYQDTQAEELDVPDFLK</sequence>
<keyword id="KW-0131">Cell cycle</keyword>
<keyword id="KW-0132">Cell division</keyword>
<keyword id="KW-0963">Cytoplasm</keyword>
<keyword id="KW-0342">GTP-binding</keyword>
<keyword id="KW-0547">Nucleotide-binding</keyword>
<keyword id="KW-0717">Septation</keyword>
<organism>
    <name type="scientific">Streptomyces griseus</name>
    <dbReference type="NCBI Taxonomy" id="1911"/>
    <lineage>
        <taxon>Bacteria</taxon>
        <taxon>Bacillati</taxon>
        <taxon>Actinomycetota</taxon>
        <taxon>Actinomycetes</taxon>
        <taxon>Kitasatosporales</taxon>
        <taxon>Streptomycetaceae</taxon>
        <taxon>Streptomyces</taxon>
    </lineage>
</organism>
<evidence type="ECO:0000255" key="1">
    <source>
        <dbReference type="HAMAP-Rule" id="MF_00909"/>
    </source>
</evidence>
<evidence type="ECO:0000256" key="2">
    <source>
        <dbReference type="SAM" id="MobiDB-lite"/>
    </source>
</evidence>
<name>FTSZ_STRGR</name>
<proteinExistence type="inferred from homology"/>
<dbReference type="EMBL" id="U07344">
    <property type="protein sequence ID" value="AAA56889.1"/>
    <property type="molecule type" value="Genomic_DNA"/>
</dbReference>
<dbReference type="SMR" id="P45501"/>
<dbReference type="STRING" id="1911.GCA_001715295_03627"/>
<dbReference type="GO" id="GO:0032153">
    <property type="term" value="C:cell division site"/>
    <property type="evidence" value="ECO:0007669"/>
    <property type="project" value="UniProtKB-UniRule"/>
</dbReference>
<dbReference type="GO" id="GO:0005737">
    <property type="term" value="C:cytoplasm"/>
    <property type="evidence" value="ECO:0007669"/>
    <property type="project" value="UniProtKB-SubCell"/>
</dbReference>
<dbReference type="GO" id="GO:0005525">
    <property type="term" value="F:GTP binding"/>
    <property type="evidence" value="ECO:0007669"/>
    <property type="project" value="UniProtKB-UniRule"/>
</dbReference>
<dbReference type="GO" id="GO:0003924">
    <property type="term" value="F:GTPase activity"/>
    <property type="evidence" value="ECO:0007669"/>
    <property type="project" value="UniProtKB-UniRule"/>
</dbReference>
<dbReference type="GO" id="GO:0000917">
    <property type="term" value="P:division septum assembly"/>
    <property type="evidence" value="ECO:0007669"/>
    <property type="project" value="UniProtKB-KW"/>
</dbReference>
<dbReference type="GO" id="GO:0043093">
    <property type="term" value="P:FtsZ-dependent cytokinesis"/>
    <property type="evidence" value="ECO:0007669"/>
    <property type="project" value="UniProtKB-UniRule"/>
</dbReference>
<dbReference type="GO" id="GO:0051258">
    <property type="term" value="P:protein polymerization"/>
    <property type="evidence" value="ECO:0007669"/>
    <property type="project" value="UniProtKB-UniRule"/>
</dbReference>
<dbReference type="CDD" id="cd02201">
    <property type="entry name" value="FtsZ_type1"/>
    <property type="match status" value="1"/>
</dbReference>
<dbReference type="FunFam" id="3.30.1330.20:FF:000005">
    <property type="entry name" value="Cell division protein FtsZ"/>
    <property type="match status" value="1"/>
</dbReference>
<dbReference type="FunFam" id="3.40.50.1440:FF:000023">
    <property type="entry name" value="Cell division protein FtsZ"/>
    <property type="match status" value="1"/>
</dbReference>
<dbReference type="Gene3D" id="3.30.1330.20">
    <property type="entry name" value="Tubulin/FtsZ, C-terminal domain"/>
    <property type="match status" value="1"/>
</dbReference>
<dbReference type="Gene3D" id="3.40.50.1440">
    <property type="entry name" value="Tubulin/FtsZ, GTPase domain"/>
    <property type="match status" value="1"/>
</dbReference>
<dbReference type="HAMAP" id="MF_00909">
    <property type="entry name" value="FtsZ"/>
    <property type="match status" value="1"/>
</dbReference>
<dbReference type="InterPro" id="IPR000158">
    <property type="entry name" value="Cell_div_FtsZ"/>
</dbReference>
<dbReference type="InterPro" id="IPR020805">
    <property type="entry name" value="Cell_div_FtsZ_CS"/>
</dbReference>
<dbReference type="InterPro" id="IPR045061">
    <property type="entry name" value="FtsZ/CetZ"/>
</dbReference>
<dbReference type="InterPro" id="IPR024757">
    <property type="entry name" value="FtsZ_C"/>
</dbReference>
<dbReference type="InterPro" id="IPR008280">
    <property type="entry name" value="Tub_FtsZ_C"/>
</dbReference>
<dbReference type="InterPro" id="IPR037103">
    <property type="entry name" value="Tubulin/FtsZ-like_C"/>
</dbReference>
<dbReference type="InterPro" id="IPR018316">
    <property type="entry name" value="Tubulin/FtsZ_2-layer-sand-dom"/>
</dbReference>
<dbReference type="InterPro" id="IPR036525">
    <property type="entry name" value="Tubulin/FtsZ_GTPase_sf"/>
</dbReference>
<dbReference type="InterPro" id="IPR003008">
    <property type="entry name" value="Tubulin_FtsZ_GTPase"/>
</dbReference>
<dbReference type="NCBIfam" id="TIGR00065">
    <property type="entry name" value="ftsZ"/>
    <property type="match status" value="1"/>
</dbReference>
<dbReference type="PANTHER" id="PTHR30314">
    <property type="entry name" value="CELL DIVISION PROTEIN FTSZ-RELATED"/>
    <property type="match status" value="1"/>
</dbReference>
<dbReference type="PANTHER" id="PTHR30314:SF3">
    <property type="entry name" value="MITOCHONDRIAL DIVISION PROTEIN FSZA"/>
    <property type="match status" value="1"/>
</dbReference>
<dbReference type="Pfam" id="PF12327">
    <property type="entry name" value="FtsZ_C"/>
    <property type="match status" value="1"/>
</dbReference>
<dbReference type="Pfam" id="PF00091">
    <property type="entry name" value="Tubulin"/>
    <property type="match status" value="1"/>
</dbReference>
<dbReference type="PRINTS" id="PR00423">
    <property type="entry name" value="CELLDVISFTSZ"/>
</dbReference>
<dbReference type="SMART" id="SM00864">
    <property type="entry name" value="Tubulin"/>
    <property type="match status" value="1"/>
</dbReference>
<dbReference type="SMART" id="SM00865">
    <property type="entry name" value="Tubulin_C"/>
    <property type="match status" value="1"/>
</dbReference>
<dbReference type="SUPFAM" id="SSF55307">
    <property type="entry name" value="Tubulin C-terminal domain-like"/>
    <property type="match status" value="1"/>
</dbReference>
<dbReference type="SUPFAM" id="SSF52490">
    <property type="entry name" value="Tubulin nucleotide-binding domain-like"/>
    <property type="match status" value="1"/>
</dbReference>
<dbReference type="PROSITE" id="PS01134">
    <property type="entry name" value="FTSZ_1"/>
    <property type="match status" value="1"/>
</dbReference>
<dbReference type="PROSITE" id="PS01135">
    <property type="entry name" value="FTSZ_2"/>
    <property type="match status" value="1"/>
</dbReference>
<comment type="function">
    <text evidence="1">Essential cell division protein that forms a contractile ring structure (Z ring) at the future cell division site. The regulation of the ring assembly controls the timing and the location of cell division. One of the functions of the FtsZ ring is to recruit other cell division proteins to the septum to produce a new cell wall between the dividing cells. Binds GTP and shows GTPase activity.</text>
</comment>
<comment type="subunit">
    <text evidence="1">Homodimer. Polymerizes to form a dynamic ring structure in a strictly GTP-dependent manner. Interacts directly with several other division proteins.</text>
</comment>
<comment type="subcellular location">
    <subcellularLocation>
        <location evidence="1">Cytoplasm</location>
    </subcellularLocation>
    <text evidence="1">Assembles at midcell at the inner surface of the cytoplasmic membrane.</text>
</comment>
<comment type="similarity">
    <text evidence="1">Belongs to the FtsZ family.</text>
</comment>
<reference key="1">
    <citation type="journal article" date="1994" name="Gene">
        <title>Expression of the division-controlling gene ftsZ during growth and sporulation of the filamentous bacterium Streptomyces griseus.</title>
        <authorList>
            <person name="Dharmatilake A.J."/>
            <person name="Kendrick K.E."/>
        </authorList>
    </citation>
    <scope>NUCLEOTIDE SEQUENCE [GENOMIC DNA]</scope>
    <source>
        <strain>ATCC 23345 / DSM 40236 / JCM 4644 / NBRC 12875 / NCIMB 13023 / NRRL B-2682 / VKM Ac-800 / IMRU 3463</strain>
    </source>
</reference>
<accession>P45501</accession>
<feature type="chain" id="PRO_0000114389" description="Cell division protein FtsZ">
    <location>
        <begin position="1"/>
        <end position="407"/>
    </location>
</feature>
<feature type="region of interest" description="Disordered" evidence="2">
    <location>
        <begin position="312"/>
        <end position="407"/>
    </location>
</feature>
<feature type="compositionally biased region" description="Low complexity" evidence="2">
    <location>
        <begin position="336"/>
        <end position="348"/>
    </location>
</feature>
<feature type="compositionally biased region" description="Low complexity" evidence="2">
    <location>
        <begin position="368"/>
        <end position="377"/>
    </location>
</feature>
<feature type="compositionally biased region" description="Pro residues" evidence="2">
    <location>
        <begin position="381"/>
        <end position="390"/>
    </location>
</feature>
<feature type="compositionally biased region" description="Acidic residues" evidence="2">
    <location>
        <begin position="396"/>
        <end position="407"/>
    </location>
</feature>
<feature type="binding site" evidence="1">
    <location>
        <begin position="18"/>
        <end position="22"/>
    </location>
    <ligand>
        <name>GTP</name>
        <dbReference type="ChEBI" id="CHEBI:37565"/>
    </ligand>
</feature>
<feature type="binding site" evidence="1">
    <location>
        <begin position="105"/>
        <end position="107"/>
    </location>
    <ligand>
        <name>GTP</name>
        <dbReference type="ChEBI" id="CHEBI:37565"/>
    </ligand>
</feature>
<feature type="binding site" evidence="1">
    <location>
        <position position="136"/>
    </location>
    <ligand>
        <name>GTP</name>
        <dbReference type="ChEBI" id="CHEBI:37565"/>
    </ligand>
</feature>
<feature type="binding site" evidence="1">
    <location>
        <position position="140"/>
    </location>
    <ligand>
        <name>GTP</name>
        <dbReference type="ChEBI" id="CHEBI:37565"/>
    </ligand>
</feature>
<feature type="binding site" evidence="1">
    <location>
        <position position="184"/>
    </location>
    <ligand>
        <name>GTP</name>
        <dbReference type="ChEBI" id="CHEBI:37565"/>
    </ligand>
</feature>
<gene>
    <name evidence="1" type="primary">ftsZ</name>
</gene>
<protein>
    <recommendedName>
        <fullName evidence="1">Cell division protein FtsZ</fullName>
    </recommendedName>
</protein>